<sequence>MELTLGLVAIASAILIAFGALGTAIGFGLLGGRFLEAVARQPELAPQLQTRMFLIAGLLDAVPMIGVGIGLFFIFANPFVG</sequence>
<dbReference type="EMBL" id="CU459141">
    <property type="protein sequence ID" value="CAM88485.1"/>
    <property type="molecule type" value="Genomic_DNA"/>
</dbReference>
<dbReference type="RefSeq" id="WP_000424060.1">
    <property type="nucleotide sequence ID" value="NZ_JBDGFB010000006.1"/>
</dbReference>
<dbReference type="SMR" id="B0VBP8"/>
<dbReference type="EnsemblBacteria" id="CAM88485">
    <property type="protein sequence ID" value="CAM88485"/>
    <property type="gene ID" value="ABAYE3721"/>
</dbReference>
<dbReference type="GeneID" id="97424931"/>
<dbReference type="KEGG" id="aby:ABAYE3721"/>
<dbReference type="HOGENOM" id="CLU_148047_1_0_6"/>
<dbReference type="GO" id="GO:0005886">
    <property type="term" value="C:plasma membrane"/>
    <property type="evidence" value="ECO:0007669"/>
    <property type="project" value="UniProtKB-SubCell"/>
</dbReference>
<dbReference type="GO" id="GO:0045259">
    <property type="term" value="C:proton-transporting ATP synthase complex"/>
    <property type="evidence" value="ECO:0007669"/>
    <property type="project" value="UniProtKB-KW"/>
</dbReference>
<dbReference type="GO" id="GO:0033177">
    <property type="term" value="C:proton-transporting two-sector ATPase complex, proton-transporting domain"/>
    <property type="evidence" value="ECO:0007669"/>
    <property type="project" value="InterPro"/>
</dbReference>
<dbReference type="GO" id="GO:0008289">
    <property type="term" value="F:lipid binding"/>
    <property type="evidence" value="ECO:0007669"/>
    <property type="project" value="UniProtKB-KW"/>
</dbReference>
<dbReference type="GO" id="GO:0046933">
    <property type="term" value="F:proton-transporting ATP synthase activity, rotational mechanism"/>
    <property type="evidence" value="ECO:0007669"/>
    <property type="project" value="UniProtKB-UniRule"/>
</dbReference>
<dbReference type="CDD" id="cd18185">
    <property type="entry name" value="ATP-synt_Fo_c_ATPE"/>
    <property type="match status" value="1"/>
</dbReference>
<dbReference type="FunFam" id="1.20.20.10:FF:000002">
    <property type="entry name" value="ATP synthase subunit c"/>
    <property type="match status" value="1"/>
</dbReference>
<dbReference type="Gene3D" id="1.20.20.10">
    <property type="entry name" value="F1F0 ATP synthase subunit C"/>
    <property type="match status" value="1"/>
</dbReference>
<dbReference type="HAMAP" id="MF_01396">
    <property type="entry name" value="ATP_synth_c_bact"/>
    <property type="match status" value="1"/>
</dbReference>
<dbReference type="InterPro" id="IPR005953">
    <property type="entry name" value="ATP_synth_csu_bac/chlpt"/>
</dbReference>
<dbReference type="InterPro" id="IPR000454">
    <property type="entry name" value="ATP_synth_F0_csu"/>
</dbReference>
<dbReference type="InterPro" id="IPR020537">
    <property type="entry name" value="ATP_synth_F0_csu_DDCD_BS"/>
</dbReference>
<dbReference type="InterPro" id="IPR038662">
    <property type="entry name" value="ATP_synth_F0_csu_sf"/>
</dbReference>
<dbReference type="InterPro" id="IPR002379">
    <property type="entry name" value="ATPase_proteolipid_c-like_dom"/>
</dbReference>
<dbReference type="InterPro" id="IPR035921">
    <property type="entry name" value="F/V-ATP_Csub_sf"/>
</dbReference>
<dbReference type="NCBIfam" id="TIGR01260">
    <property type="entry name" value="ATP_synt_c"/>
    <property type="match status" value="1"/>
</dbReference>
<dbReference type="NCBIfam" id="NF005363">
    <property type="entry name" value="PRK06876.1"/>
    <property type="match status" value="1"/>
</dbReference>
<dbReference type="Pfam" id="PF00137">
    <property type="entry name" value="ATP-synt_C"/>
    <property type="match status" value="1"/>
</dbReference>
<dbReference type="PRINTS" id="PR00124">
    <property type="entry name" value="ATPASEC"/>
</dbReference>
<dbReference type="SUPFAM" id="SSF81333">
    <property type="entry name" value="F1F0 ATP synthase subunit C"/>
    <property type="match status" value="1"/>
</dbReference>
<dbReference type="PROSITE" id="PS00605">
    <property type="entry name" value="ATPASE_C"/>
    <property type="match status" value="1"/>
</dbReference>
<protein>
    <recommendedName>
        <fullName evidence="1">ATP synthase subunit c</fullName>
    </recommendedName>
    <alternativeName>
        <fullName evidence="1">ATP synthase F(0) sector subunit c</fullName>
    </alternativeName>
    <alternativeName>
        <fullName evidence="1">F-type ATPase subunit c</fullName>
        <shortName evidence="1">F-ATPase subunit c</shortName>
    </alternativeName>
    <alternativeName>
        <fullName evidence="1">Lipid-binding protein</fullName>
    </alternativeName>
</protein>
<comment type="function">
    <text evidence="1">F(1)F(0) ATP synthase produces ATP from ADP in the presence of a proton or sodium gradient. F-type ATPases consist of two structural domains, F(1) containing the extramembraneous catalytic core and F(0) containing the membrane proton channel, linked together by a central stalk and a peripheral stalk. During catalysis, ATP synthesis in the catalytic domain of F(1) is coupled via a rotary mechanism of the central stalk subunits to proton translocation.</text>
</comment>
<comment type="function">
    <text evidence="1">Key component of the F(0) channel; it plays a direct role in translocation across the membrane. A homomeric c-ring of between 10-14 subunits forms the central stalk rotor element with the F(1) delta and epsilon subunits.</text>
</comment>
<comment type="subunit">
    <text evidence="1">F-type ATPases have 2 components, F(1) - the catalytic core - and F(0) - the membrane proton channel. F(1) has five subunits: alpha(3), beta(3), gamma(1), delta(1), epsilon(1). F(0) has three main subunits: a(1), b(2) and c(10-14). The alpha and beta chains form an alternating ring which encloses part of the gamma chain. F(1) is attached to F(0) by a central stalk formed by the gamma and epsilon chains, while a peripheral stalk is formed by the delta and b chains.</text>
</comment>
<comment type="subcellular location">
    <subcellularLocation>
        <location evidence="1">Cell inner membrane</location>
        <topology evidence="1">Multi-pass membrane protein</topology>
    </subcellularLocation>
</comment>
<comment type="similarity">
    <text evidence="1">Belongs to the ATPase C chain family.</text>
</comment>
<accession>B0VBP8</accession>
<proteinExistence type="inferred from homology"/>
<reference key="1">
    <citation type="journal article" date="2008" name="PLoS ONE">
        <title>Comparative analysis of Acinetobacters: three genomes for three lifestyles.</title>
        <authorList>
            <person name="Vallenet D."/>
            <person name="Nordmann P."/>
            <person name="Barbe V."/>
            <person name="Poirel L."/>
            <person name="Mangenot S."/>
            <person name="Bataille E."/>
            <person name="Dossat C."/>
            <person name="Gas S."/>
            <person name="Kreimeyer A."/>
            <person name="Lenoble P."/>
            <person name="Oztas S."/>
            <person name="Poulain J."/>
            <person name="Segurens B."/>
            <person name="Robert C."/>
            <person name="Abergel C."/>
            <person name="Claverie J.-M."/>
            <person name="Raoult D."/>
            <person name="Medigue C."/>
            <person name="Weissenbach J."/>
            <person name="Cruveiller S."/>
        </authorList>
    </citation>
    <scope>NUCLEOTIDE SEQUENCE [LARGE SCALE GENOMIC DNA]</scope>
    <source>
        <strain>AYE</strain>
    </source>
</reference>
<name>ATPL_ACIBY</name>
<evidence type="ECO:0000255" key="1">
    <source>
        <dbReference type="HAMAP-Rule" id="MF_01396"/>
    </source>
</evidence>
<organism>
    <name type="scientific">Acinetobacter baumannii (strain AYE)</name>
    <dbReference type="NCBI Taxonomy" id="509173"/>
    <lineage>
        <taxon>Bacteria</taxon>
        <taxon>Pseudomonadati</taxon>
        <taxon>Pseudomonadota</taxon>
        <taxon>Gammaproteobacteria</taxon>
        <taxon>Moraxellales</taxon>
        <taxon>Moraxellaceae</taxon>
        <taxon>Acinetobacter</taxon>
        <taxon>Acinetobacter calcoaceticus/baumannii complex</taxon>
    </lineage>
</organism>
<keyword id="KW-0066">ATP synthesis</keyword>
<keyword id="KW-0997">Cell inner membrane</keyword>
<keyword id="KW-1003">Cell membrane</keyword>
<keyword id="KW-0138">CF(0)</keyword>
<keyword id="KW-0375">Hydrogen ion transport</keyword>
<keyword id="KW-0406">Ion transport</keyword>
<keyword id="KW-0446">Lipid-binding</keyword>
<keyword id="KW-0472">Membrane</keyword>
<keyword id="KW-0812">Transmembrane</keyword>
<keyword id="KW-1133">Transmembrane helix</keyword>
<keyword id="KW-0813">Transport</keyword>
<gene>
    <name evidence="1" type="primary">atpE</name>
    <name type="ordered locus">ABAYE3721</name>
</gene>
<feature type="chain" id="PRO_1000184306" description="ATP synthase subunit c">
    <location>
        <begin position="1"/>
        <end position="81"/>
    </location>
</feature>
<feature type="transmembrane region" description="Helical" evidence="1">
    <location>
        <begin position="7"/>
        <end position="27"/>
    </location>
</feature>
<feature type="transmembrane region" description="Helical" evidence="1">
    <location>
        <begin position="55"/>
        <end position="75"/>
    </location>
</feature>
<feature type="site" description="Reversibly protonated during proton transport" evidence="1">
    <location>
        <position position="60"/>
    </location>
</feature>